<reference key="1">
    <citation type="journal article" date="1996" name="DNA Cell Biol.">
        <title>Structural organization, sequence, and expression of the chicken NRAMP1 gene encoding the natural resistance-associated macrophage protein 1.</title>
        <authorList>
            <person name="Hu J."/>
            <person name="Bumstead N."/>
            <person name="Skamene E."/>
            <person name="Gros P."/>
            <person name="Malo D."/>
        </authorList>
    </citation>
    <scope>NUCLEOTIDE SEQUENCE [GENOMIC DNA / MRNA]</scope>
    <source>
        <strain>White leghorn</strain>
        <tissue>Spleen</tissue>
    </source>
</reference>
<gene>
    <name type="primary">SLC11A1</name>
    <name type="synonym">NRAMP1</name>
</gene>
<evidence type="ECO:0000250" key="1">
    <source>
        <dbReference type="UniProtKB" id="P49279"/>
    </source>
</evidence>
<evidence type="ECO:0000255" key="2"/>
<evidence type="ECO:0000305" key="3"/>
<organism>
    <name type="scientific">Gallus gallus</name>
    <name type="common">Chicken</name>
    <dbReference type="NCBI Taxonomy" id="9031"/>
    <lineage>
        <taxon>Eukaryota</taxon>
        <taxon>Metazoa</taxon>
        <taxon>Chordata</taxon>
        <taxon>Craniata</taxon>
        <taxon>Vertebrata</taxon>
        <taxon>Euteleostomi</taxon>
        <taxon>Archelosauria</taxon>
        <taxon>Archosauria</taxon>
        <taxon>Dinosauria</taxon>
        <taxon>Saurischia</taxon>
        <taxon>Theropoda</taxon>
        <taxon>Coelurosauria</taxon>
        <taxon>Aves</taxon>
        <taxon>Neognathae</taxon>
        <taxon>Galloanserae</taxon>
        <taxon>Galliformes</taxon>
        <taxon>Phasianidae</taxon>
        <taxon>Phasianinae</taxon>
        <taxon>Gallus</taxon>
    </lineage>
</organism>
<accession>P51027</accession>
<proteinExistence type="evidence at transcript level"/>
<protein>
    <recommendedName>
        <fullName>Natural resistance-associated macrophage protein 1</fullName>
        <shortName>NRAMP 1</shortName>
    </recommendedName>
    <alternativeName>
        <fullName>Solute carrier family 11 member 1</fullName>
    </alternativeName>
</protein>
<feature type="chain" id="PRO_0000212593" description="Natural resistance-associated macrophage protein 1">
    <location>
        <begin position="1"/>
        <end position="555"/>
    </location>
</feature>
<feature type="topological domain" description="Cytoplasmic" evidence="2">
    <location>
        <begin position="1"/>
        <end position="63"/>
    </location>
</feature>
<feature type="transmembrane region" description="Helical" evidence="2">
    <location>
        <begin position="64"/>
        <end position="81"/>
    </location>
</feature>
<feature type="topological domain" description="Extracellular" evidence="2">
    <location>
        <begin position="82"/>
        <end position="90"/>
    </location>
</feature>
<feature type="transmembrane region" description="Helical" evidence="2">
    <location>
        <begin position="91"/>
        <end position="110"/>
    </location>
</feature>
<feature type="topological domain" description="Cytoplasmic" evidence="2">
    <location>
        <begin position="111"/>
        <end position="147"/>
    </location>
</feature>
<feature type="transmembrane region" description="Helical" evidence="2">
    <location>
        <begin position="148"/>
        <end position="168"/>
    </location>
</feature>
<feature type="topological domain" description="Extracellular" evidence="2">
    <location>
        <begin position="169"/>
        <end position="172"/>
    </location>
</feature>
<feature type="transmembrane region" description="Helical" evidence="2">
    <location>
        <begin position="173"/>
        <end position="192"/>
    </location>
</feature>
<feature type="topological domain" description="Cytoplasmic" evidence="2">
    <location>
        <begin position="193"/>
        <end position="201"/>
    </location>
</feature>
<feature type="transmembrane region" description="Helical" evidence="2">
    <location>
        <begin position="202"/>
        <end position="222"/>
    </location>
</feature>
<feature type="topological domain" description="Extracellular" evidence="2">
    <location>
        <begin position="223"/>
        <end position="245"/>
    </location>
</feature>
<feature type="transmembrane region" description="Helical" evidence="2">
    <location>
        <begin position="246"/>
        <end position="264"/>
    </location>
</feature>
<feature type="topological domain" description="Cytoplasmic" evidence="2">
    <location>
        <begin position="265"/>
        <end position="292"/>
    </location>
</feature>
<feature type="transmembrane region" description="Helical" evidence="2">
    <location>
        <begin position="293"/>
        <end position="312"/>
    </location>
</feature>
<feature type="topological domain" description="Extracellular" evidence="2">
    <location>
        <begin position="313"/>
        <end position="354"/>
    </location>
</feature>
<feature type="transmembrane region" description="Helical" evidence="2">
    <location>
        <begin position="355"/>
        <end position="374"/>
    </location>
</feature>
<feature type="topological domain" description="Cytoplasmic" evidence="2">
    <location>
        <begin position="375"/>
        <end position="405"/>
    </location>
</feature>
<feature type="transmembrane region" description="Helical" evidence="2">
    <location>
        <begin position="406"/>
        <end position="423"/>
    </location>
</feature>
<feature type="topological domain" description="Extracellular" evidence="2">
    <location>
        <begin position="424"/>
        <end position="434"/>
    </location>
</feature>
<feature type="transmembrane region" description="Helical" evidence="2">
    <location>
        <begin position="435"/>
        <end position="455"/>
    </location>
</feature>
<feature type="topological domain" description="Cytoplasmic" evidence="2">
    <location>
        <begin position="456"/>
        <end position="471"/>
    </location>
</feature>
<feature type="transmembrane region" description="Helical" evidence="2">
    <location>
        <begin position="472"/>
        <end position="493"/>
    </location>
</feature>
<feature type="topological domain" description="Extracellular" evidence="2">
    <location>
        <begin position="494"/>
        <end position="501"/>
    </location>
</feature>
<feature type="transmembrane region" description="Helical" evidence="2">
    <location>
        <begin position="502"/>
        <end position="521"/>
    </location>
</feature>
<feature type="topological domain" description="Cytoplasmic" evidence="2">
    <location>
        <begin position="522"/>
        <end position="555"/>
    </location>
</feature>
<feature type="glycosylation site" description="N-linked (GlcNAc...) asparagine" evidence="2">
    <location>
        <position position="329"/>
    </location>
</feature>
<feature type="glycosylation site" description="N-linked (GlcNAc...) asparagine" evidence="2">
    <location>
        <position position="343"/>
    </location>
</feature>
<dbReference type="EMBL" id="U40598">
    <property type="protein sequence ID" value="AAC59756.1"/>
    <property type="molecule type" value="mRNA"/>
</dbReference>
<dbReference type="EMBL" id="S82465">
    <property type="protein sequence ID" value="AAD14396.1"/>
    <property type="molecule type" value="Genomic_DNA"/>
</dbReference>
<dbReference type="RefSeq" id="NP_990295.1">
    <property type="nucleotide sequence ID" value="NM_204964.2"/>
</dbReference>
<dbReference type="SMR" id="P51027"/>
<dbReference type="FunCoup" id="P51027">
    <property type="interactions" value="186"/>
</dbReference>
<dbReference type="STRING" id="9031.ENSGALP00000018625"/>
<dbReference type="GlyCosmos" id="P51027">
    <property type="glycosylation" value="2 sites, No reported glycans"/>
</dbReference>
<dbReference type="GlyGen" id="P51027">
    <property type="glycosylation" value="2 sites"/>
</dbReference>
<dbReference type="PaxDb" id="9031-ENSGALP00000018625"/>
<dbReference type="Ensembl" id="ENSGALT00010051196.1">
    <property type="protein sequence ID" value="ENSGALP00010030387.1"/>
    <property type="gene ID" value="ENSGALG00010021140.1"/>
</dbReference>
<dbReference type="GeneID" id="395811"/>
<dbReference type="KEGG" id="gga:395811"/>
<dbReference type="CTD" id="6556"/>
<dbReference type="VEuPathDB" id="HostDB:geneid_395811"/>
<dbReference type="eggNOG" id="KOG1291">
    <property type="taxonomic scope" value="Eukaryota"/>
</dbReference>
<dbReference type="GeneTree" id="ENSGT00940000160799"/>
<dbReference type="HOGENOM" id="CLU_020088_5_2_1"/>
<dbReference type="InParanoid" id="P51027"/>
<dbReference type="OMA" id="STYLVWT"/>
<dbReference type="OrthoDB" id="409173at2759"/>
<dbReference type="PhylomeDB" id="P51027"/>
<dbReference type="Reactome" id="R-GGA-1222556">
    <property type="pathway name" value="ROS and RNS production in phagocytes"/>
</dbReference>
<dbReference type="Reactome" id="R-GGA-425410">
    <property type="pathway name" value="Metal ion SLC transporters"/>
</dbReference>
<dbReference type="Reactome" id="R-GGA-6798695">
    <property type="pathway name" value="Neutrophil degranulation"/>
</dbReference>
<dbReference type="Reactome" id="R-GGA-6803544">
    <property type="pathway name" value="Ion influx/efflux at host-pathogen interface"/>
</dbReference>
<dbReference type="PRO" id="PR:P51027"/>
<dbReference type="Proteomes" id="UP000000539">
    <property type="component" value="Chromosome 7"/>
</dbReference>
<dbReference type="Bgee" id="ENSGALG00000011434">
    <property type="expression patterns" value="Expressed in spleen and 13 other cell types or tissues"/>
</dbReference>
<dbReference type="GO" id="GO:0010008">
    <property type="term" value="C:endosome membrane"/>
    <property type="evidence" value="ECO:0000318"/>
    <property type="project" value="GO_Central"/>
</dbReference>
<dbReference type="GO" id="GO:0031902">
    <property type="term" value="C:late endosome membrane"/>
    <property type="evidence" value="ECO:0007669"/>
    <property type="project" value="UniProtKB-SubCell"/>
</dbReference>
<dbReference type="GO" id="GO:0005765">
    <property type="term" value="C:lysosomal membrane"/>
    <property type="evidence" value="ECO:0000318"/>
    <property type="project" value="GO_Central"/>
</dbReference>
<dbReference type="GO" id="GO:0005635">
    <property type="term" value="C:nuclear envelope"/>
    <property type="evidence" value="ECO:0000314"/>
    <property type="project" value="AgBase"/>
</dbReference>
<dbReference type="GO" id="GO:0030670">
    <property type="term" value="C:phagocytic vesicle membrane"/>
    <property type="evidence" value="ECO:0000318"/>
    <property type="project" value="GO_Central"/>
</dbReference>
<dbReference type="GO" id="GO:0005886">
    <property type="term" value="C:plasma membrane"/>
    <property type="evidence" value="ECO:0000314"/>
    <property type="project" value="AgBase"/>
</dbReference>
<dbReference type="GO" id="GO:0015086">
    <property type="term" value="F:cadmium ion transmembrane transporter activity"/>
    <property type="evidence" value="ECO:0000316"/>
    <property type="project" value="AgBase"/>
</dbReference>
<dbReference type="GO" id="GO:0005381">
    <property type="term" value="F:iron ion transmembrane transporter activity"/>
    <property type="evidence" value="ECO:0000250"/>
    <property type="project" value="UniProtKB"/>
</dbReference>
<dbReference type="GO" id="GO:0005384">
    <property type="term" value="F:manganese ion transmembrane transporter activity"/>
    <property type="evidence" value="ECO:0000250"/>
    <property type="project" value="UniProtKB"/>
</dbReference>
<dbReference type="GO" id="GO:0051139">
    <property type="term" value="F:metal cation:proton antiporter activity"/>
    <property type="evidence" value="ECO:0000316"/>
    <property type="project" value="BHF-UCL"/>
</dbReference>
<dbReference type="GO" id="GO:0046915">
    <property type="term" value="F:transition metal ion transmembrane transporter activity"/>
    <property type="evidence" value="ECO:0000316"/>
    <property type="project" value="BHF-UCL"/>
</dbReference>
<dbReference type="GO" id="GO:0005385">
    <property type="term" value="F:zinc ion transmembrane transporter activity"/>
    <property type="evidence" value="ECO:0000316"/>
    <property type="project" value="AgBase"/>
</dbReference>
<dbReference type="GO" id="GO:0070574">
    <property type="term" value="P:cadmium ion transmembrane transport"/>
    <property type="evidence" value="ECO:0000316"/>
    <property type="project" value="AgBase"/>
</dbReference>
<dbReference type="GO" id="GO:0098849">
    <property type="term" value="P:cellular detoxification of cadmium ion"/>
    <property type="evidence" value="ECO:0000316"/>
    <property type="project" value="BHF-UCL"/>
</dbReference>
<dbReference type="GO" id="GO:0034755">
    <property type="term" value="P:iron ion transmembrane transport"/>
    <property type="evidence" value="ECO:0000318"/>
    <property type="project" value="GO_Central"/>
</dbReference>
<dbReference type="GO" id="GO:0006826">
    <property type="term" value="P:iron ion transport"/>
    <property type="evidence" value="ECO:0000250"/>
    <property type="project" value="UniProtKB"/>
</dbReference>
<dbReference type="GO" id="GO:0006828">
    <property type="term" value="P:manganese ion transport"/>
    <property type="evidence" value="ECO:0000250"/>
    <property type="project" value="UniProtKB"/>
</dbReference>
<dbReference type="GO" id="GO:0030001">
    <property type="term" value="P:metal ion transport"/>
    <property type="evidence" value="ECO:0000250"/>
    <property type="project" value="BHF-UCL"/>
</dbReference>
<dbReference type="GO" id="GO:0006829">
    <property type="term" value="P:zinc ion transport"/>
    <property type="evidence" value="ECO:0000316"/>
    <property type="project" value="AgBase"/>
</dbReference>
<dbReference type="HAMAP" id="MF_00221">
    <property type="entry name" value="NRAMP"/>
    <property type="match status" value="1"/>
</dbReference>
<dbReference type="InterPro" id="IPR001046">
    <property type="entry name" value="NRAMP_fam"/>
</dbReference>
<dbReference type="NCBIfam" id="TIGR01197">
    <property type="entry name" value="nramp"/>
    <property type="match status" value="1"/>
</dbReference>
<dbReference type="NCBIfam" id="NF037982">
    <property type="entry name" value="Nramp_1"/>
    <property type="match status" value="1"/>
</dbReference>
<dbReference type="PANTHER" id="PTHR11706:SF52">
    <property type="entry name" value="NATURAL RESISTANCE-ASSOCIATED MACROPHAGE PROTEIN 1"/>
    <property type="match status" value="1"/>
</dbReference>
<dbReference type="PANTHER" id="PTHR11706">
    <property type="entry name" value="SOLUTE CARRIER PROTEIN FAMILY 11 MEMBER"/>
    <property type="match status" value="1"/>
</dbReference>
<dbReference type="Pfam" id="PF01566">
    <property type="entry name" value="Nramp"/>
    <property type="match status" value="1"/>
</dbReference>
<dbReference type="PRINTS" id="PR00447">
    <property type="entry name" value="NATRESASSCMP"/>
</dbReference>
<keyword id="KW-0967">Endosome</keyword>
<keyword id="KW-0325">Glycoprotein</keyword>
<keyword id="KW-0406">Ion transport</keyword>
<keyword id="KW-0408">Iron</keyword>
<keyword id="KW-0410">Iron transport</keyword>
<keyword id="KW-0458">Lysosome</keyword>
<keyword id="KW-0472">Membrane</keyword>
<keyword id="KW-1185">Reference proteome</keyword>
<keyword id="KW-0812">Transmembrane</keyword>
<keyword id="KW-1133">Transmembrane helix</keyword>
<keyword id="KW-0813">Transport</keyword>
<name>NRAM1_CHICK</name>
<comment type="function">
    <text evidence="1">Macrophage-specific antiporter that fluxes metal ions in either direction against a proton gradient. Localized to late endosomal lysosomal membranes, delivers bivalent cations from the cytosol into these acidic compartments where they may directly affect antimicrobial activity. Involved in iron metabolism and host natural resistance to infection with intracellular parasites. Pathogen resistance involves sequestration of Fe(2+) and Mn(2+), cofactors of both prokaryotic and eukaryotic catalases and superoxide dismutases, not only to protect the macrophage against its own generation of reactive oxygen species, but to deny the cations to the pathogen for synthesis of its protective enzymes.</text>
</comment>
<comment type="catalytic activity">
    <reaction evidence="1">
        <text>Zn(2+)(in) + H(+)(out) = Zn(2+)(out) + H(+)(in)</text>
        <dbReference type="Rhea" id="RHEA:28839"/>
        <dbReference type="ChEBI" id="CHEBI:15378"/>
        <dbReference type="ChEBI" id="CHEBI:29105"/>
    </reaction>
</comment>
<comment type="catalytic activity">
    <reaction evidence="1">
        <text>Fe(2+)(in) + H(+)(out) = Fe(2+)(out) + H(+)(in)</text>
        <dbReference type="Rhea" id="RHEA:29439"/>
        <dbReference type="ChEBI" id="CHEBI:15378"/>
        <dbReference type="ChEBI" id="CHEBI:29033"/>
    </reaction>
</comment>
<comment type="catalytic activity">
    <reaction evidence="1">
        <text>Mn(2+)(in) + H(+)(out) = Mn(2+)(out) + H(+)(in)</text>
        <dbReference type="Rhea" id="RHEA:73063"/>
        <dbReference type="ChEBI" id="CHEBI:15378"/>
        <dbReference type="ChEBI" id="CHEBI:29035"/>
    </reaction>
</comment>
<comment type="subcellular location">
    <subcellularLocation>
        <location evidence="1">Late endosome membrane</location>
        <topology evidence="2">Multi-pass membrane protein</topology>
    </subcellularLocation>
    <subcellularLocation>
        <location evidence="1">Lysosome membrane</location>
        <topology evidence="2">Multi-pass membrane protein</topology>
    </subcellularLocation>
</comment>
<comment type="tissue specificity">
    <text>Macrophages; spleen and thymus and at lower level in liver and lung.</text>
</comment>
<comment type="induction">
    <text>In response to lymphokine or bacterial products.</text>
</comment>
<comment type="similarity">
    <text evidence="3">Belongs to the NRAMP family.</text>
</comment>
<sequence length="555" mass="60967">MSGSGPAMASLEPGLAGSLNRGQTDASNVPVPPHHPVPHAQTYLDELISIPKGSTPGFSFRKLWAFTGPGFLMSIAYLDPGNVESDLQCGAVAGFKLLWVLLWATVLGLLCQRLAIRLGVVTGKDLAEICYLYYPRVPRVLLWLMMEIAIIGSDMQEVIGTAIAFSLLSAGRIPLWGGVLITITDTLFFLFLDKYGLRKLEAFFGFLITIMALTFGYEYVMVRPAQTEVLKGIFLPYCPGCGREELLQAVGIVGAIIMPHNIFLHSSLVKTRAIDRSKKEEVKEANMYFLTESCLALFVSFLINLFVMAVFGEAFYHQRNEDVHNKCVNSSVSRYASIFPINNETVSVDIYQGGVILGCYFGAAALYIWAVGILAAGQSSTMTGTYAGQFVMEGFLQLRWSRFTRVLFTRSLAILPTLFVAAFRDVSQLTGMNDLLNVLQSILLPFAVLPVLTFTSLRPLMHDFANGLLGQVLMSLITGLVCAINVYFVVDFLPTLRGLGYLIPLGLLLVAYVAFVTYLLWTCSIAHGARFLARGRYNRFSFDVTADVPGLAGPH</sequence>